<feature type="chain" id="PRO_0000254920" description="Cytochrome c oxidase subunit 2">
    <location>
        <begin position="1"/>
        <end position="227"/>
    </location>
</feature>
<feature type="topological domain" description="Mitochondrial intermembrane" evidence="3">
    <location>
        <begin position="1"/>
        <end position="14"/>
    </location>
</feature>
<feature type="transmembrane region" description="Helical; Name=I" evidence="3">
    <location>
        <begin position="15"/>
        <end position="45"/>
    </location>
</feature>
<feature type="topological domain" description="Mitochondrial matrix" evidence="3">
    <location>
        <begin position="46"/>
        <end position="59"/>
    </location>
</feature>
<feature type="transmembrane region" description="Helical; Name=II" evidence="3">
    <location>
        <begin position="60"/>
        <end position="87"/>
    </location>
</feature>
<feature type="topological domain" description="Mitochondrial intermembrane" evidence="3">
    <location>
        <begin position="88"/>
        <end position="227"/>
    </location>
</feature>
<feature type="binding site" evidence="3">
    <location>
        <position position="161"/>
    </location>
    <ligand>
        <name>Cu cation</name>
        <dbReference type="ChEBI" id="CHEBI:23378"/>
        <label>A1</label>
    </ligand>
</feature>
<feature type="binding site" evidence="3">
    <location>
        <position position="196"/>
    </location>
    <ligand>
        <name>Cu cation</name>
        <dbReference type="ChEBI" id="CHEBI:23378"/>
        <label>A1</label>
    </ligand>
</feature>
<feature type="binding site" evidence="3">
    <location>
        <position position="196"/>
    </location>
    <ligand>
        <name>Cu cation</name>
        <dbReference type="ChEBI" id="CHEBI:23378"/>
        <label>A2</label>
    </ligand>
</feature>
<feature type="binding site" evidence="3">
    <location>
        <position position="198"/>
    </location>
    <ligand>
        <name>Cu cation</name>
        <dbReference type="ChEBI" id="CHEBI:23378"/>
        <label>A2</label>
    </ligand>
</feature>
<feature type="binding site" evidence="3">
    <location>
        <position position="198"/>
    </location>
    <ligand>
        <name>Mg(2+)</name>
        <dbReference type="ChEBI" id="CHEBI:18420"/>
        <note>ligand shared with MT-CO1</note>
    </ligand>
</feature>
<feature type="binding site" evidence="3">
    <location>
        <position position="200"/>
    </location>
    <ligand>
        <name>Cu cation</name>
        <dbReference type="ChEBI" id="CHEBI:23378"/>
        <label>A1</label>
    </ligand>
</feature>
<feature type="binding site" evidence="3">
    <location>
        <position position="200"/>
    </location>
    <ligand>
        <name>Cu cation</name>
        <dbReference type="ChEBI" id="CHEBI:23378"/>
        <label>A2</label>
    </ligand>
</feature>
<feature type="binding site" evidence="3">
    <location>
        <position position="204"/>
    </location>
    <ligand>
        <name>Cu cation</name>
        <dbReference type="ChEBI" id="CHEBI:23378"/>
        <label>A2</label>
    </ligand>
</feature>
<feature type="binding site" evidence="3">
    <location>
        <position position="207"/>
    </location>
    <ligand>
        <name>Cu cation</name>
        <dbReference type="ChEBI" id="CHEBI:23378"/>
        <label>A1</label>
    </ligand>
</feature>
<keyword id="KW-0186">Copper</keyword>
<keyword id="KW-0249">Electron transport</keyword>
<keyword id="KW-0460">Magnesium</keyword>
<keyword id="KW-0472">Membrane</keyword>
<keyword id="KW-0479">Metal-binding</keyword>
<keyword id="KW-0496">Mitochondrion</keyword>
<keyword id="KW-0999">Mitochondrion inner membrane</keyword>
<keyword id="KW-0679">Respiratory chain</keyword>
<keyword id="KW-1278">Translocase</keyword>
<keyword id="KW-0812">Transmembrane</keyword>
<keyword id="KW-1133">Transmembrane helix</keyword>
<keyword id="KW-0813">Transport</keyword>
<protein>
    <recommendedName>
        <fullName>Cytochrome c oxidase subunit 2</fullName>
        <ecNumber>7.1.1.9</ecNumber>
    </recommendedName>
    <alternativeName>
        <fullName>Cytochrome c oxidase polypeptide II</fullName>
    </alternativeName>
</protein>
<dbReference type="EC" id="7.1.1.9"/>
<dbReference type="EMBL" id="DQ019081">
    <property type="protein sequence ID" value="ABA28335.1"/>
    <property type="molecule type" value="Genomic_DNA"/>
</dbReference>
<dbReference type="SMR" id="Q38S65"/>
<dbReference type="GO" id="GO:0005743">
    <property type="term" value="C:mitochondrial inner membrane"/>
    <property type="evidence" value="ECO:0007669"/>
    <property type="project" value="UniProtKB-SubCell"/>
</dbReference>
<dbReference type="GO" id="GO:0045277">
    <property type="term" value="C:respiratory chain complex IV"/>
    <property type="evidence" value="ECO:0000250"/>
    <property type="project" value="UniProtKB"/>
</dbReference>
<dbReference type="GO" id="GO:0005507">
    <property type="term" value="F:copper ion binding"/>
    <property type="evidence" value="ECO:0007669"/>
    <property type="project" value="InterPro"/>
</dbReference>
<dbReference type="GO" id="GO:0004129">
    <property type="term" value="F:cytochrome-c oxidase activity"/>
    <property type="evidence" value="ECO:0007669"/>
    <property type="project" value="UniProtKB-EC"/>
</dbReference>
<dbReference type="GO" id="GO:0042773">
    <property type="term" value="P:ATP synthesis coupled electron transport"/>
    <property type="evidence" value="ECO:0007669"/>
    <property type="project" value="TreeGrafter"/>
</dbReference>
<dbReference type="CDD" id="cd13912">
    <property type="entry name" value="CcO_II_C"/>
    <property type="match status" value="1"/>
</dbReference>
<dbReference type="FunFam" id="1.10.287.90:FF:000001">
    <property type="entry name" value="Cytochrome c oxidase subunit 2"/>
    <property type="match status" value="1"/>
</dbReference>
<dbReference type="FunFam" id="2.60.40.420:FF:000001">
    <property type="entry name" value="Cytochrome c oxidase subunit 2"/>
    <property type="match status" value="1"/>
</dbReference>
<dbReference type="Gene3D" id="1.10.287.90">
    <property type="match status" value="1"/>
</dbReference>
<dbReference type="Gene3D" id="2.60.40.420">
    <property type="entry name" value="Cupredoxins - blue copper proteins"/>
    <property type="match status" value="1"/>
</dbReference>
<dbReference type="InterPro" id="IPR045187">
    <property type="entry name" value="CcO_II"/>
</dbReference>
<dbReference type="InterPro" id="IPR002429">
    <property type="entry name" value="CcO_II-like_C"/>
</dbReference>
<dbReference type="InterPro" id="IPR034210">
    <property type="entry name" value="CcO_II_C"/>
</dbReference>
<dbReference type="InterPro" id="IPR001505">
    <property type="entry name" value="Copper_CuA"/>
</dbReference>
<dbReference type="InterPro" id="IPR008972">
    <property type="entry name" value="Cupredoxin"/>
</dbReference>
<dbReference type="InterPro" id="IPR014222">
    <property type="entry name" value="Cyt_c_oxidase_su2"/>
</dbReference>
<dbReference type="InterPro" id="IPR011759">
    <property type="entry name" value="Cyt_c_oxidase_su2_TM_dom"/>
</dbReference>
<dbReference type="InterPro" id="IPR036257">
    <property type="entry name" value="Cyt_c_oxidase_su2_TM_sf"/>
</dbReference>
<dbReference type="NCBIfam" id="TIGR02866">
    <property type="entry name" value="CoxB"/>
    <property type="match status" value="1"/>
</dbReference>
<dbReference type="PANTHER" id="PTHR22888:SF9">
    <property type="entry name" value="CYTOCHROME C OXIDASE SUBUNIT 2"/>
    <property type="match status" value="1"/>
</dbReference>
<dbReference type="PANTHER" id="PTHR22888">
    <property type="entry name" value="CYTOCHROME C OXIDASE, SUBUNIT II"/>
    <property type="match status" value="1"/>
</dbReference>
<dbReference type="Pfam" id="PF00116">
    <property type="entry name" value="COX2"/>
    <property type="match status" value="1"/>
</dbReference>
<dbReference type="Pfam" id="PF02790">
    <property type="entry name" value="COX2_TM"/>
    <property type="match status" value="1"/>
</dbReference>
<dbReference type="PRINTS" id="PR01166">
    <property type="entry name" value="CYCOXIDASEII"/>
</dbReference>
<dbReference type="SUPFAM" id="SSF49503">
    <property type="entry name" value="Cupredoxins"/>
    <property type="match status" value="1"/>
</dbReference>
<dbReference type="SUPFAM" id="SSF81464">
    <property type="entry name" value="Cytochrome c oxidase subunit II-like, transmembrane region"/>
    <property type="match status" value="1"/>
</dbReference>
<dbReference type="PROSITE" id="PS00078">
    <property type="entry name" value="COX2"/>
    <property type="match status" value="1"/>
</dbReference>
<dbReference type="PROSITE" id="PS50857">
    <property type="entry name" value="COX2_CUA"/>
    <property type="match status" value="1"/>
</dbReference>
<dbReference type="PROSITE" id="PS50999">
    <property type="entry name" value="COX2_TM"/>
    <property type="match status" value="1"/>
</dbReference>
<geneLocation type="mitochondrion"/>
<evidence type="ECO:0000250" key="1">
    <source>
        <dbReference type="UniProtKB" id="P00403"/>
    </source>
</evidence>
<evidence type="ECO:0000250" key="2">
    <source>
        <dbReference type="UniProtKB" id="P00410"/>
    </source>
</evidence>
<evidence type="ECO:0000250" key="3">
    <source>
        <dbReference type="UniProtKB" id="P68530"/>
    </source>
</evidence>
<evidence type="ECO:0000305" key="4"/>
<organism>
    <name type="scientific">Desmodillus auricularis</name>
    <name type="common">Cape short-eared gerbil</name>
    <dbReference type="NCBI Taxonomy" id="298896"/>
    <lineage>
        <taxon>Eukaryota</taxon>
        <taxon>Metazoa</taxon>
        <taxon>Chordata</taxon>
        <taxon>Craniata</taxon>
        <taxon>Vertebrata</taxon>
        <taxon>Euteleostomi</taxon>
        <taxon>Mammalia</taxon>
        <taxon>Eutheria</taxon>
        <taxon>Euarchontoglires</taxon>
        <taxon>Glires</taxon>
        <taxon>Rodentia</taxon>
        <taxon>Myomorpha</taxon>
        <taxon>Muroidea</taxon>
        <taxon>Muridae</taxon>
        <taxon>Gerbillinae</taxon>
        <taxon>Desmodillus</taxon>
    </lineage>
</organism>
<accession>Q38S65</accession>
<proteinExistence type="inferred from homology"/>
<reference key="1">
    <citation type="journal article" date="2005" name="Mol. Phylogenet. Evol.">
        <title>Multigene phylogeny of the Old World mice, Murinae, reveals distinct geographic lineages and the declining utility of mitochondrial genes compared to nuclear genes.</title>
        <authorList>
            <person name="Steppan S.J."/>
            <person name="Adkins R.M."/>
            <person name="Spinks P.Q."/>
            <person name="Hale C."/>
        </authorList>
    </citation>
    <scope>NUCLEOTIDE SEQUENCE [GENOMIC DNA]</scope>
</reference>
<name>COX2_DESAU</name>
<gene>
    <name type="primary">MT-CO2</name>
    <name type="synonym">COII</name>
    <name type="synonym">COXII</name>
    <name type="synonym">MTCO2</name>
</gene>
<sequence length="227" mass="25993">MAYPMQLGLQDATSPIMEELMNFHDHTLMIVFLISSLVLYLISLMLTTKLIHTNTMDAQEVETIWTILPAIILVLIALPSLRILYMMDEINNPVLTVKTMGHQWYWSYEYTDYEDLCFDSYMIPTNELKPGELRLLEVDNRVILPIELPIRMLISSEDVLHSWAVPSLGLKTDAIPGRLNQATVTSNRPGIFYGQCSEICGSNHSFMPIVLEMIPLKFFENWSSSMT</sequence>
<comment type="function">
    <text evidence="2">Component of the cytochrome c oxidase, the last enzyme in the mitochondrial electron transport chain which drives oxidative phosphorylation. The respiratory chain contains 3 multisubunit complexes succinate dehydrogenase (complex II, CII), ubiquinol-cytochrome c oxidoreductase (cytochrome b-c1 complex, complex III, CIII) and cytochrome c oxidase (complex IV, CIV), that cooperate to transfer electrons derived from NADH and succinate to molecular oxygen, creating an electrochemical gradient over the inner membrane that drives transmembrane transport and the ATP synthase. Cytochrome c oxidase is the component of the respiratory chain that catalyzes the reduction of oxygen to water. Electrons originating from reduced cytochrome c in the intermembrane space (IMS) are transferred via the dinuclear copper A center (CU(A)) of subunit 2 and heme A of subunit 1 to the active site in subunit 1, a binuclear center (BNC) formed by heme A3 and copper B (CU(B)). The BNC reduces molecular oxygen to 2 water molecules using 4 electrons from cytochrome c in the IMS and 4 protons from the mitochondrial matrix.</text>
</comment>
<comment type="catalytic activity">
    <reaction evidence="2">
        <text>4 Fe(II)-[cytochrome c] + O2 + 8 H(+)(in) = 4 Fe(III)-[cytochrome c] + 2 H2O + 4 H(+)(out)</text>
        <dbReference type="Rhea" id="RHEA:11436"/>
        <dbReference type="Rhea" id="RHEA-COMP:10350"/>
        <dbReference type="Rhea" id="RHEA-COMP:14399"/>
        <dbReference type="ChEBI" id="CHEBI:15377"/>
        <dbReference type="ChEBI" id="CHEBI:15378"/>
        <dbReference type="ChEBI" id="CHEBI:15379"/>
        <dbReference type="ChEBI" id="CHEBI:29033"/>
        <dbReference type="ChEBI" id="CHEBI:29034"/>
        <dbReference type="EC" id="7.1.1.9"/>
    </reaction>
    <physiologicalReaction direction="left-to-right" evidence="2">
        <dbReference type="Rhea" id="RHEA:11437"/>
    </physiologicalReaction>
</comment>
<comment type="cofactor">
    <cofactor evidence="3">
        <name>Cu cation</name>
        <dbReference type="ChEBI" id="CHEBI:23378"/>
    </cofactor>
    <text evidence="3">Binds a dinuclear copper A center per subunit.</text>
</comment>
<comment type="subunit">
    <text evidence="1 3">Component of the cytochrome c oxidase (complex IV, CIV), a multisubunit enzyme composed of 14 subunits. The complex is composed of a catalytic core of 3 subunits MT-CO1, MT-CO2 and MT-CO3, encoded in the mitochondrial DNA, and 11 supernumerary subunits COX4I, COX5A, COX5B, COX6A, COX6B, COX6C, COX7A, COX7B, COX7C, COX8 and NDUFA4, which are encoded in the nuclear genome. The complex exists as a monomer or a dimer and forms supercomplexes (SCs) in the inner mitochondrial membrane with NADH-ubiquinone oxidoreductase (complex I, CI) and ubiquinol-cytochrome c oxidoreductase (cytochrome b-c1 complex, complex III, CIII), resulting in different assemblies (supercomplex SCI(1)III(2)IV(1) and megacomplex MCI(2)III(2)IV(2)) (By similarity). Found in a complex with TMEM177, COA6, COX18, COX20, SCO1 and SCO2. Interacts with TMEM177 in a COX20-dependent manner. Interacts with COX20. Interacts with COX16 (By similarity).</text>
</comment>
<comment type="subcellular location">
    <subcellularLocation>
        <location evidence="3">Mitochondrion inner membrane</location>
        <topology evidence="3">Multi-pass membrane protein</topology>
    </subcellularLocation>
</comment>
<comment type="similarity">
    <text evidence="4">Belongs to the cytochrome c oxidase subunit 2 family.</text>
</comment>